<keyword id="KW-0049">Antioxidant</keyword>
<keyword id="KW-0464">Manganese</keyword>
<keyword id="KW-0479">Metal-binding</keyword>
<keyword id="KW-0496">Mitochondrion</keyword>
<keyword id="KW-0560">Oxidoreductase</keyword>
<keyword id="KW-0809">Transit peptide</keyword>
<accession>Q9P4T6</accession>
<proteinExistence type="inferred from homology"/>
<name>SODM_AGABI</name>
<organism>
    <name type="scientific">Agaricus bisporus</name>
    <name type="common">White button mushroom</name>
    <dbReference type="NCBI Taxonomy" id="5341"/>
    <lineage>
        <taxon>Eukaryota</taxon>
        <taxon>Fungi</taxon>
        <taxon>Dikarya</taxon>
        <taxon>Basidiomycota</taxon>
        <taxon>Agaricomycotina</taxon>
        <taxon>Agaricomycetes</taxon>
        <taxon>Agaricomycetidae</taxon>
        <taxon>Agaricales</taxon>
        <taxon>Agaricineae</taxon>
        <taxon>Agaricaceae</taxon>
        <taxon>Agaricus</taxon>
    </lineage>
</organism>
<reference key="1">
    <citation type="submission" date="2000-06" db="EMBL/GenBank/DDBJ databases">
        <title>Oxidative stress in the harvested mushroom, Agaricus bisporus.</title>
        <authorList>
            <person name="Eastwood D.C."/>
            <person name="Bains N.K."/>
            <person name="Henderson J."/>
            <person name="Burton K.S."/>
        </authorList>
    </citation>
    <scope>NUCLEOTIDE SEQUENCE [GENOMIC DNA]</scope>
    <source>
        <strain>Horst U3</strain>
    </source>
</reference>
<feature type="transit peptide" description="Mitochondrion" evidence="4">
    <location>
        <begin position="1"/>
        <end status="unknown"/>
    </location>
</feature>
<feature type="chain" id="PRO_0000032880" description="Superoxide dismutase [Mn], mitochondrial">
    <location>
        <begin status="unknown"/>
        <end position="200"/>
    </location>
</feature>
<feature type="binding site" evidence="1">
    <location>
        <position position="27"/>
    </location>
    <ligand>
        <name>Mn(2+)</name>
        <dbReference type="ChEBI" id="CHEBI:29035"/>
    </ligand>
</feature>
<feature type="binding site" evidence="1">
    <location>
        <position position="72"/>
    </location>
    <ligand>
        <name>Mn(2+)</name>
        <dbReference type="ChEBI" id="CHEBI:29035"/>
    </ligand>
</feature>
<feature type="binding site" evidence="1">
    <location>
        <position position="157"/>
    </location>
    <ligand>
        <name>Mn(2+)</name>
        <dbReference type="ChEBI" id="CHEBI:29035"/>
    </ligand>
</feature>
<feature type="binding site" evidence="1">
    <location>
        <position position="161"/>
    </location>
    <ligand>
        <name>Mn(2+)</name>
        <dbReference type="ChEBI" id="CHEBI:29035"/>
    </ligand>
</feature>
<sequence>MAHVLPDLPYAYDALEPYISRQIMELHHKKTSSDLCECAQHCRGCLRHSTAVVGGFDLSLFFILTTLGHINHSLFWQNLAPAAGAGGQLKPGPLKDAIDQTFGGLDNLKKEFNTTTAGIQGSGWGWLGVNPSNKRLEISTTPNQDPLLNLVPIIGVDIWEHAFYLQYLNVKADYLNAIWSVINFDEAQRRYVEATQGSKL</sequence>
<comment type="function">
    <text evidence="1">Destroys superoxide anion radicals which are normally produced within the cells and which are toxic to biological systems.</text>
</comment>
<comment type="catalytic activity">
    <reaction evidence="2">
        <text>2 superoxide + 2 H(+) = H2O2 + O2</text>
        <dbReference type="Rhea" id="RHEA:20696"/>
        <dbReference type="ChEBI" id="CHEBI:15378"/>
        <dbReference type="ChEBI" id="CHEBI:15379"/>
        <dbReference type="ChEBI" id="CHEBI:16240"/>
        <dbReference type="ChEBI" id="CHEBI:18421"/>
        <dbReference type="EC" id="1.15.1.1"/>
    </reaction>
</comment>
<comment type="cofactor">
    <cofactor evidence="3">
        <name>Mn(2+)</name>
        <dbReference type="ChEBI" id="CHEBI:29035"/>
    </cofactor>
    <text evidence="3">Binds 1 Mn(2+) ion per subunit.</text>
</comment>
<comment type="subcellular location">
    <subcellularLocation>
        <location evidence="3">Mitochondrion matrix</location>
    </subcellularLocation>
</comment>
<comment type="similarity">
    <text evidence="5">Belongs to the iron/manganese superoxide dismutase family.</text>
</comment>
<gene>
    <name type="primary">sod</name>
</gene>
<evidence type="ECO:0000250" key="1">
    <source>
        <dbReference type="UniProtKB" id="P04179"/>
    </source>
</evidence>
<evidence type="ECO:0000250" key="2">
    <source>
        <dbReference type="UniProtKB" id="P0A0J3"/>
    </source>
</evidence>
<evidence type="ECO:0000250" key="3">
    <source>
        <dbReference type="UniProtKB" id="Q9UQX0"/>
    </source>
</evidence>
<evidence type="ECO:0000255" key="4"/>
<evidence type="ECO:0000305" key="5"/>
<protein>
    <recommendedName>
        <fullName>Superoxide dismutase [Mn], mitochondrial</fullName>
        <ecNumber evidence="2">1.15.1.1</ecNumber>
    </recommendedName>
</protein>
<dbReference type="EC" id="1.15.1.1" evidence="2"/>
<dbReference type="EMBL" id="AJ404469">
    <property type="protein sequence ID" value="CAB94731.1"/>
    <property type="molecule type" value="Genomic_DNA"/>
</dbReference>
<dbReference type="SMR" id="Q9P4T6"/>
<dbReference type="GO" id="GO:0005759">
    <property type="term" value="C:mitochondrial matrix"/>
    <property type="evidence" value="ECO:0007669"/>
    <property type="project" value="UniProtKB-SubCell"/>
</dbReference>
<dbReference type="GO" id="GO:0030145">
    <property type="term" value="F:manganese ion binding"/>
    <property type="evidence" value="ECO:0007669"/>
    <property type="project" value="TreeGrafter"/>
</dbReference>
<dbReference type="GO" id="GO:0004784">
    <property type="term" value="F:superoxide dismutase activity"/>
    <property type="evidence" value="ECO:0007669"/>
    <property type="project" value="UniProtKB-EC"/>
</dbReference>
<dbReference type="FunFam" id="3.55.40.20:FF:000002">
    <property type="entry name" value="Superoxide dismutase"/>
    <property type="match status" value="1"/>
</dbReference>
<dbReference type="Gene3D" id="3.55.40.20">
    <property type="entry name" value="Iron/manganese superoxide dismutase, C-terminal domain"/>
    <property type="match status" value="1"/>
</dbReference>
<dbReference type="InterPro" id="IPR050265">
    <property type="entry name" value="Fe/Mn_Superoxide_Dismutase"/>
</dbReference>
<dbReference type="InterPro" id="IPR001189">
    <property type="entry name" value="Mn/Fe_SOD"/>
</dbReference>
<dbReference type="InterPro" id="IPR019833">
    <property type="entry name" value="Mn/Fe_SOD_BS"/>
</dbReference>
<dbReference type="InterPro" id="IPR019832">
    <property type="entry name" value="Mn/Fe_SOD_C"/>
</dbReference>
<dbReference type="InterPro" id="IPR019831">
    <property type="entry name" value="Mn/Fe_SOD_N"/>
</dbReference>
<dbReference type="InterPro" id="IPR036324">
    <property type="entry name" value="Mn/Fe_SOD_N_sf"/>
</dbReference>
<dbReference type="InterPro" id="IPR036314">
    <property type="entry name" value="SOD_C_sf"/>
</dbReference>
<dbReference type="PANTHER" id="PTHR11404">
    <property type="entry name" value="SUPEROXIDE DISMUTASE 2"/>
    <property type="match status" value="1"/>
</dbReference>
<dbReference type="PANTHER" id="PTHR11404:SF6">
    <property type="entry name" value="SUPEROXIDE DISMUTASE [MN], MITOCHONDRIAL"/>
    <property type="match status" value="1"/>
</dbReference>
<dbReference type="Pfam" id="PF02777">
    <property type="entry name" value="Sod_Fe_C"/>
    <property type="match status" value="1"/>
</dbReference>
<dbReference type="Pfam" id="PF00081">
    <property type="entry name" value="Sod_Fe_N"/>
    <property type="match status" value="1"/>
</dbReference>
<dbReference type="PIRSF" id="PIRSF000349">
    <property type="entry name" value="SODismutase"/>
    <property type="match status" value="1"/>
</dbReference>
<dbReference type="PRINTS" id="PR01703">
    <property type="entry name" value="MNSODISMTASE"/>
</dbReference>
<dbReference type="SUPFAM" id="SSF54719">
    <property type="entry name" value="Fe,Mn superoxide dismutase (SOD), C-terminal domain"/>
    <property type="match status" value="1"/>
</dbReference>
<dbReference type="SUPFAM" id="SSF46609">
    <property type="entry name" value="Fe,Mn superoxide dismutase (SOD), N-terminal domain"/>
    <property type="match status" value="1"/>
</dbReference>
<dbReference type="PROSITE" id="PS00088">
    <property type="entry name" value="SOD_MN"/>
    <property type="match status" value="1"/>
</dbReference>